<accession>P01680</accession>
<feature type="signal peptide">
    <location>
        <begin position="1"/>
        <end position="22"/>
    </location>
</feature>
<feature type="chain" id="PRO_0000015188" description="Ig kappa chain V-IV region S107B">
    <location>
        <begin position="23"/>
        <end position="129"/>
    </location>
</feature>
<feature type="region of interest" description="Framework-1">
    <location>
        <begin position="23"/>
        <end position="45"/>
    </location>
</feature>
<feature type="region of interest" description="Complementarity-determining-1">
    <location>
        <begin position="46"/>
        <end position="57"/>
    </location>
</feature>
<feature type="region of interest" description="Framework-2">
    <location>
        <begin position="58"/>
        <end position="72"/>
    </location>
</feature>
<feature type="region of interest" description="Complementarity-determining-2">
    <location>
        <begin position="73"/>
        <end position="79"/>
    </location>
</feature>
<feature type="region of interest" description="Framework-3">
    <location>
        <begin position="80"/>
        <end position="111"/>
    </location>
</feature>
<feature type="region of interest" description="Complementarity-determining-3">
    <location>
        <begin position="112"/>
        <end position="118"/>
    </location>
</feature>
<feature type="region of interest" description="Framework-4">
    <location>
        <begin position="119"/>
        <end position="128"/>
    </location>
</feature>
<feature type="disulfide bond" evidence="1">
    <location>
        <begin position="45"/>
        <end position="111"/>
    </location>
</feature>
<feature type="non-terminal residue">
    <location>
        <position position="129"/>
    </location>
</feature>
<proteinExistence type="predicted"/>
<keyword id="KW-1064">Adaptive immunity</keyword>
<keyword id="KW-1015">Disulfide bond</keyword>
<keyword id="KW-0391">Immunity</keyword>
<keyword id="KW-1280">Immunoglobulin</keyword>
<keyword id="KW-1185">Reference proteome</keyword>
<keyword id="KW-0732">Signal</keyword>
<evidence type="ECO:0000255" key="1">
    <source>
        <dbReference type="PROSITE-ProRule" id="PRU00114"/>
    </source>
</evidence>
<reference key="1">
    <citation type="journal article" date="1981" name="Cell">
        <title>Two kappa immunoglobulin genes are expressed in the myeloma S107.</title>
        <authorList>
            <person name="Kwan S.-P."/>
            <person name="Max E.E."/>
            <person name="Seidman J.G."/>
            <person name="Leder P."/>
            <person name="Scharff M.D."/>
        </authorList>
    </citation>
    <scope>NUCLEOTIDE SEQUENCE [GENOMIC DNA]</scope>
</reference>
<organism>
    <name type="scientific">Mus musculus</name>
    <name type="common">Mouse</name>
    <dbReference type="NCBI Taxonomy" id="10090"/>
    <lineage>
        <taxon>Eukaryota</taxon>
        <taxon>Metazoa</taxon>
        <taxon>Chordata</taxon>
        <taxon>Craniata</taxon>
        <taxon>Vertebrata</taxon>
        <taxon>Euteleostomi</taxon>
        <taxon>Mammalia</taxon>
        <taxon>Eutheria</taxon>
        <taxon>Euarchontoglires</taxon>
        <taxon>Glires</taxon>
        <taxon>Rodentia</taxon>
        <taxon>Myomorpha</taxon>
        <taxon>Muroidea</taxon>
        <taxon>Muridae</taxon>
        <taxon>Murinae</taxon>
        <taxon>Mus</taxon>
        <taxon>Mus</taxon>
    </lineage>
</organism>
<comment type="miscellaneous">
    <text>This protein, in which there is a deletion of two amino acids at the V-J recombination site (after position 118), is synthesized but not secreted in cells that express and secrete the normal kappa chain S107.</text>
</comment>
<name>KV4A1_MOUSE</name>
<protein>
    <recommendedName>
        <fullName>Ig kappa chain V-IV region S107B</fullName>
    </recommendedName>
</protein>
<sequence length="129" mass="13834">MDLQVQIIXFLLISVTVIMSRGENVLTQSPAIMAASLGQKVTMTCSASSSVSSSYLHWYQQKSGASPKPLIHRTSNLASGVPARFSGSGSGTSYSLTISSVEAEDDATYYCQQWSGYPFGSGTKLEIKR</sequence>
<dbReference type="EMBL" id="J00577">
    <property type="protein sequence ID" value="AAA38780.1"/>
    <property type="molecule type" value="Genomic_DNA"/>
</dbReference>
<dbReference type="EMBL" id="V00780">
    <property type="protein sequence ID" value="CAA24157.1"/>
    <property type="molecule type" value="Genomic_DNA"/>
</dbReference>
<dbReference type="PIR" id="A01943">
    <property type="entry name" value="KVMS7B"/>
</dbReference>
<dbReference type="FunCoup" id="P01680">
    <property type="interactions" value="730"/>
</dbReference>
<dbReference type="SwissPalm" id="P01680"/>
<dbReference type="CPTAC" id="non-CPTAC-3652"/>
<dbReference type="jPOST" id="P01680"/>
<dbReference type="PeptideAtlas" id="P01680"/>
<dbReference type="InParanoid" id="P01680"/>
<dbReference type="Proteomes" id="UP000000589">
    <property type="component" value="Unplaced"/>
</dbReference>
<dbReference type="RNAct" id="P01680">
    <property type="molecule type" value="protein"/>
</dbReference>
<dbReference type="GO" id="GO:0019814">
    <property type="term" value="C:immunoglobulin complex"/>
    <property type="evidence" value="ECO:0000318"/>
    <property type="project" value="GO_Central"/>
</dbReference>
<dbReference type="GO" id="GO:0002250">
    <property type="term" value="P:adaptive immune response"/>
    <property type="evidence" value="ECO:0007669"/>
    <property type="project" value="UniProtKB-KW"/>
</dbReference>
<dbReference type="GO" id="GO:0006955">
    <property type="term" value="P:immune response"/>
    <property type="evidence" value="ECO:0000318"/>
    <property type="project" value="GO_Central"/>
</dbReference>
<dbReference type="FunFam" id="2.60.40.10:FF:001317">
    <property type="entry name" value="Immunoglobulin kappa chain variable 4-54"/>
    <property type="match status" value="1"/>
</dbReference>
<dbReference type="Gene3D" id="2.60.40.10">
    <property type="entry name" value="Immunoglobulins"/>
    <property type="match status" value="1"/>
</dbReference>
<dbReference type="InterPro" id="IPR007110">
    <property type="entry name" value="Ig-like_dom"/>
</dbReference>
<dbReference type="InterPro" id="IPR036179">
    <property type="entry name" value="Ig-like_dom_sf"/>
</dbReference>
<dbReference type="InterPro" id="IPR013783">
    <property type="entry name" value="Ig-like_fold"/>
</dbReference>
<dbReference type="InterPro" id="IPR003599">
    <property type="entry name" value="Ig_sub"/>
</dbReference>
<dbReference type="InterPro" id="IPR013106">
    <property type="entry name" value="Ig_V-set"/>
</dbReference>
<dbReference type="InterPro" id="IPR050150">
    <property type="entry name" value="IgV_Light_Chain"/>
</dbReference>
<dbReference type="PANTHER" id="PTHR23267">
    <property type="entry name" value="IMMUNOGLOBULIN LIGHT CHAIN"/>
    <property type="match status" value="1"/>
</dbReference>
<dbReference type="Pfam" id="PF07686">
    <property type="entry name" value="V-set"/>
    <property type="match status" value="1"/>
</dbReference>
<dbReference type="SMART" id="SM00409">
    <property type="entry name" value="IG"/>
    <property type="match status" value="1"/>
</dbReference>
<dbReference type="SMART" id="SM00406">
    <property type="entry name" value="IGv"/>
    <property type="match status" value="1"/>
</dbReference>
<dbReference type="SUPFAM" id="SSF48726">
    <property type="entry name" value="Immunoglobulin"/>
    <property type="match status" value="1"/>
</dbReference>
<dbReference type="PROSITE" id="PS50835">
    <property type="entry name" value="IG_LIKE"/>
    <property type="match status" value="1"/>
</dbReference>